<feature type="chain" id="PRO_0000190275" description="Recombination protein RecR">
    <location>
        <begin position="1"/>
        <end position="198"/>
    </location>
</feature>
<feature type="domain" description="Toprim" evidence="1">
    <location>
        <begin position="80"/>
        <end position="175"/>
    </location>
</feature>
<feature type="zinc finger region" description="C4-type" evidence="1">
    <location>
        <begin position="57"/>
        <end position="72"/>
    </location>
</feature>
<reference key="1">
    <citation type="journal article" date="2003" name="Nature">
        <title>Genome sequence of Bacillus cereus and comparative analysis with Bacillus anthracis.</title>
        <authorList>
            <person name="Ivanova N."/>
            <person name="Sorokin A."/>
            <person name="Anderson I."/>
            <person name="Galleron N."/>
            <person name="Candelon B."/>
            <person name="Kapatral V."/>
            <person name="Bhattacharyya A."/>
            <person name="Reznik G."/>
            <person name="Mikhailova N."/>
            <person name="Lapidus A."/>
            <person name="Chu L."/>
            <person name="Mazur M."/>
            <person name="Goltsman E."/>
            <person name="Larsen N."/>
            <person name="D'Souza M."/>
            <person name="Walunas T."/>
            <person name="Grechkin Y."/>
            <person name="Pusch G."/>
            <person name="Haselkorn R."/>
            <person name="Fonstein M."/>
            <person name="Ehrlich S.D."/>
            <person name="Overbeek R."/>
            <person name="Kyrpides N.C."/>
        </authorList>
    </citation>
    <scope>NUCLEOTIDE SEQUENCE [LARGE SCALE GENOMIC DNA]</scope>
    <source>
        <strain>ATCC 14579 / DSM 31 / CCUG 7414 / JCM 2152 / NBRC 15305 / NCIMB 9373 / NCTC 2599 / NRRL B-3711</strain>
    </source>
</reference>
<proteinExistence type="inferred from homology"/>
<protein>
    <recommendedName>
        <fullName evidence="1">Recombination protein RecR</fullName>
    </recommendedName>
</protein>
<evidence type="ECO:0000255" key="1">
    <source>
        <dbReference type="HAMAP-Rule" id="MF_00017"/>
    </source>
</evidence>
<organism>
    <name type="scientific">Bacillus cereus (strain ATCC 14579 / DSM 31 / CCUG 7414 / JCM 2152 / NBRC 15305 / NCIMB 9373 / NCTC 2599 / NRRL B-3711)</name>
    <dbReference type="NCBI Taxonomy" id="226900"/>
    <lineage>
        <taxon>Bacteria</taxon>
        <taxon>Bacillati</taxon>
        <taxon>Bacillota</taxon>
        <taxon>Bacilli</taxon>
        <taxon>Bacillales</taxon>
        <taxon>Bacillaceae</taxon>
        <taxon>Bacillus</taxon>
        <taxon>Bacillus cereus group</taxon>
    </lineage>
</organism>
<comment type="function">
    <text evidence="1">May play a role in DNA repair. It seems to be involved in an RecBC-independent recombinational process of DNA repair. It may act with RecF and RecO.</text>
</comment>
<comment type="similarity">
    <text evidence="1">Belongs to the RecR family.</text>
</comment>
<dbReference type="EMBL" id="AE016877">
    <property type="protein sequence ID" value="AAP07129.1"/>
    <property type="molecule type" value="Genomic_DNA"/>
</dbReference>
<dbReference type="RefSeq" id="NP_829928.1">
    <property type="nucleotide sequence ID" value="NC_004722.1"/>
</dbReference>
<dbReference type="RefSeq" id="WP_000559169.1">
    <property type="nucleotide sequence ID" value="NZ_CP138336.1"/>
</dbReference>
<dbReference type="SMR" id="Q81JB9"/>
<dbReference type="STRING" id="226900.BC_0026"/>
<dbReference type="GeneID" id="93011050"/>
<dbReference type="KEGG" id="bce:BC0026"/>
<dbReference type="PATRIC" id="fig|226900.8.peg.46"/>
<dbReference type="HOGENOM" id="CLU_060739_1_0_9"/>
<dbReference type="OrthoDB" id="9802672at2"/>
<dbReference type="Proteomes" id="UP000001417">
    <property type="component" value="Chromosome"/>
</dbReference>
<dbReference type="GO" id="GO:0003677">
    <property type="term" value="F:DNA binding"/>
    <property type="evidence" value="ECO:0007669"/>
    <property type="project" value="UniProtKB-UniRule"/>
</dbReference>
<dbReference type="GO" id="GO:0008270">
    <property type="term" value="F:zinc ion binding"/>
    <property type="evidence" value="ECO:0007669"/>
    <property type="project" value="UniProtKB-KW"/>
</dbReference>
<dbReference type="GO" id="GO:0006302">
    <property type="term" value="P:double-strand break repair"/>
    <property type="evidence" value="ECO:0000318"/>
    <property type="project" value="GO_Central"/>
</dbReference>
<dbReference type="GO" id="GO:0000725">
    <property type="term" value="P:recombinational repair"/>
    <property type="evidence" value="ECO:0000318"/>
    <property type="project" value="GO_Central"/>
</dbReference>
<dbReference type="CDD" id="cd01025">
    <property type="entry name" value="TOPRIM_recR"/>
    <property type="match status" value="1"/>
</dbReference>
<dbReference type="Gene3D" id="3.30.60.80">
    <property type="match status" value="1"/>
</dbReference>
<dbReference type="Gene3D" id="3.40.1360.10">
    <property type="match status" value="1"/>
</dbReference>
<dbReference type="Gene3D" id="6.10.250.240">
    <property type="match status" value="1"/>
</dbReference>
<dbReference type="Gene3D" id="1.10.8.420">
    <property type="entry name" value="RecR Domain 1"/>
    <property type="match status" value="1"/>
</dbReference>
<dbReference type="HAMAP" id="MF_00017">
    <property type="entry name" value="RecR"/>
    <property type="match status" value="1"/>
</dbReference>
<dbReference type="InterPro" id="IPR000093">
    <property type="entry name" value="DNA_Rcmb_RecR"/>
</dbReference>
<dbReference type="InterPro" id="IPR023627">
    <property type="entry name" value="Rcmb_RecR"/>
</dbReference>
<dbReference type="InterPro" id="IPR015967">
    <property type="entry name" value="Rcmb_RecR_Znf"/>
</dbReference>
<dbReference type="InterPro" id="IPR006171">
    <property type="entry name" value="TOPRIM_dom"/>
</dbReference>
<dbReference type="InterPro" id="IPR034137">
    <property type="entry name" value="TOPRIM_RecR"/>
</dbReference>
<dbReference type="NCBIfam" id="TIGR00615">
    <property type="entry name" value="recR"/>
    <property type="match status" value="1"/>
</dbReference>
<dbReference type="PANTHER" id="PTHR30446">
    <property type="entry name" value="RECOMBINATION PROTEIN RECR"/>
    <property type="match status" value="1"/>
</dbReference>
<dbReference type="PANTHER" id="PTHR30446:SF0">
    <property type="entry name" value="RECOMBINATION PROTEIN RECR"/>
    <property type="match status" value="1"/>
</dbReference>
<dbReference type="Pfam" id="PF21175">
    <property type="entry name" value="RecR_C"/>
    <property type="match status" value="1"/>
</dbReference>
<dbReference type="Pfam" id="PF21176">
    <property type="entry name" value="RecR_HhH"/>
    <property type="match status" value="1"/>
</dbReference>
<dbReference type="Pfam" id="PF02132">
    <property type="entry name" value="RecR_ZnF"/>
    <property type="match status" value="1"/>
</dbReference>
<dbReference type="Pfam" id="PF13662">
    <property type="entry name" value="Toprim_4"/>
    <property type="match status" value="1"/>
</dbReference>
<dbReference type="SMART" id="SM00493">
    <property type="entry name" value="TOPRIM"/>
    <property type="match status" value="1"/>
</dbReference>
<dbReference type="SUPFAM" id="SSF111304">
    <property type="entry name" value="Recombination protein RecR"/>
    <property type="match status" value="1"/>
</dbReference>
<dbReference type="PROSITE" id="PS01300">
    <property type="entry name" value="RECR"/>
    <property type="match status" value="1"/>
</dbReference>
<dbReference type="PROSITE" id="PS50880">
    <property type="entry name" value="TOPRIM"/>
    <property type="match status" value="1"/>
</dbReference>
<keyword id="KW-0227">DNA damage</keyword>
<keyword id="KW-0233">DNA recombination</keyword>
<keyword id="KW-0234">DNA repair</keyword>
<keyword id="KW-0479">Metal-binding</keyword>
<keyword id="KW-1185">Reference proteome</keyword>
<keyword id="KW-0862">Zinc</keyword>
<keyword id="KW-0863">Zinc-finger</keyword>
<gene>
    <name evidence="1" type="primary">recR</name>
    <name type="ordered locus">BC_0026</name>
</gene>
<sequence length="198" mass="21976">MHYPEPISKLIDSFMKLPGIGPKTAVRLAFFVLDMKEDDVLGFAKALVNAKRDLAYCSVCGHITDRDPCYICNDSHRDQSVVCVVQEPKDVIAMEKMKEYQGVYHVLRGAISPMEGIGPEDINIPQLLKRLHDETVQEVILATNPNIEGEATAMYISRLLKPTGIKVTRIAHGLPVGGDLEYADEVTLSKALEGRREV</sequence>
<name>RECR_BACCR</name>
<accession>Q81JB9</accession>